<dbReference type="EC" id="7.4.2.4" evidence="6"/>
<dbReference type="EMBL" id="GU289737">
    <property type="protein sequence ID" value="ADI56650.1"/>
    <property type="molecule type" value="mRNA"/>
</dbReference>
<dbReference type="EMBL" id="AC007727">
    <property type="protein sequence ID" value="AAD41417.1"/>
    <property type="status" value="ALT_SEQ"/>
    <property type="molecule type" value="Genomic_DNA"/>
</dbReference>
<dbReference type="EMBL" id="CP002684">
    <property type="protein sequence ID" value="AEE30132.1"/>
    <property type="molecule type" value="Genomic_DNA"/>
</dbReference>
<dbReference type="EMBL" id="CP002684">
    <property type="protein sequence ID" value="AEE30134.1"/>
    <property type="molecule type" value="Genomic_DNA"/>
</dbReference>
<dbReference type="PIR" id="E86349">
    <property type="entry name" value="E86349"/>
</dbReference>
<dbReference type="RefSeq" id="NP_001185059.1">
    <molecule id="D8WUA4-1"/>
    <property type="nucleotide sequence ID" value="NM_001198130.1"/>
</dbReference>
<dbReference type="RefSeq" id="NP_173584.5">
    <molecule id="D8WUA4-2"/>
    <property type="nucleotide sequence ID" value="NM_102014.6"/>
</dbReference>
<dbReference type="SMR" id="D8WUA4"/>
<dbReference type="FunCoup" id="D8WUA4">
    <property type="interactions" value="11"/>
</dbReference>
<dbReference type="STRING" id="3702.D8WUA4"/>
<dbReference type="iPTMnet" id="D8WUA4"/>
<dbReference type="PaxDb" id="3702-AT1G21650.3"/>
<dbReference type="ProteomicsDB" id="232875">
    <molecule id="D8WUA4-1"/>
</dbReference>
<dbReference type="EnsemblPlants" id="AT1G21650.1">
    <molecule id="D8WUA4-2"/>
    <property type="protein sequence ID" value="AT1G21650.1"/>
    <property type="gene ID" value="AT1G21650"/>
</dbReference>
<dbReference type="EnsemblPlants" id="AT1G21650.2">
    <molecule id="D8WUA4-1"/>
    <property type="protein sequence ID" value="AT1G21650.2"/>
    <property type="gene ID" value="AT1G21650"/>
</dbReference>
<dbReference type="GeneID" id="838767"/>
<dbReference type="Gramene" id="AT1G21650.1">
    <molecule id="D8WUA4-2"/>
    <property type="protein sequence ID" value="AT1G21650.1"/>
    <property type="gene ID" value="AT1G21650"/>
</dbReference>
<dbReference type="Gramene" id="AT1G21650.2">
    <molecule id="D8WUA4-1"/>
    <property type="protein sequence ID" value="AT1G21650.2"/>
    <property type="gene ID" value="AT1G21650"/>
</dbReference>
<dbReference type="KEGG" id="ath:AT1G21650"/>
<dbReference type="Araport" id="AT1G21650"/>
<dbReference type="TAIR" id="AT1G21650">
    <property type="gene designation" value="SECA2"/>
</dbReference>
<dbReference type="eggNOG" id="ENOG502QS62">
    <property type="taxonomic scope" value="Eukaryota"/>
</dbReference>
<dbReference type="InParanoid" id="D8WUA4"/>
<dbReference type="OMA" id="SHTIGME"/>
<dbReference type="PRO" id="PR:D8WUA4"/>
<dbReference type="Proteomes" id="UP000006548">
    <property type="component" value="Chromosome 1"/>
</dbReference>
<dbReference type="ExpressionAtlas" id="D8WUA4">
    <property type="expression patterns" value="baseline and differential"/>
</dbReference>
<dbReference type="GO" id="GO:0031969">
    <property type="term" value="C:chloroplast membrane"/>
    <property type="evidence" value="ECO:0007669"/>
    <property type="project" value="UniProtKB-SubCell"/>
</dbReference>
<dbReference type="GO" id="GO:0005524">
    <property type="term" value="F:ATP binding"/>
    <property type="evidence" value="ECO:0007669"/>
    <property type="project" value="UniProtKB-KW"/>
</dbReference>
<dbReference type="GO" id="GO:0016464">
    <property type="term" value="F:chloroplast protein-transporting ATPase activity"/>
    <property type="evidence" value="ECO:0007669"/>
    <property type="project" value="UniProtKB-EC"/>
</dbReference>
<dbReference type="GO" id="GO:0006886">
    <property type="term" value="P:intracellular protein transport"/>
    <property type="evidence" value="ECO:0007669"/>
    <property type="project" value="InterPro"/>
</dbReference>
<dbReference type="GO" id="GO:0017038">
    <property type="term" value="P:protein import"/>
    <property type="evidence" value="ECO:0007669"/>
    <property type="project" value="InterPro"/>
</dbReference>
<dbReference type="GO" id="GO:0006605">
    <property type="term" value="P:protein targeting"/>
    <property type="evidence" value="ECO:0007669"/>
    <property type="project" value="InterPro"/>
</dbReference>
<dbReference type="CDD" id="cd17928">
    <property type="entry name" value="DEXDc_SecA"/>
    <property type="match status" value="1"/>
</dbReference>
<dbReference type="CDD" id="cd18803">
    <property type="entry name" value="SF2_C_secA"/>
    <property type="match status" value="1"/>
</dbReference>
<dbReference type="FunFam" id="3.90.1440.10:FF:000003">
    <property type="entry name" value="Preprotein translocase SecA subunit"/>
    <property type="match status" value="1"/>
</dbReference>
<dbReference type="FunFam" id="1.10.3060.10:FF:000005">
    <property type="entry name" value="Protein translocase subunit SecA"/>
    <property type="match status" value="1"/>
</dbReference>
<dbReference type="FunFam" id="1.10.3060.10:FF:000008">
    <property type="entry name" value="Protein translocase subunit SecA"/>
    <property type="match status" value="1"/>
</dbReference>
<dbReference type="FunFam" id="3.40.50.300:FF:000334">
    <property type="entry name" value="Protein translocase subunit SecA"/>
    <property type="match status" value="1"/>
</dbReference>
<dbReference type="Gene3D" id="1.10.3060.10">
    <property type="entry name" value="Helical scaffold and wing domains of SecA"/>
    <property type="match status" value="2"/>
</dbReference>
<dbReference type="Gene3D" id="3.40.50.300">
    <property type="entry name" value="P-loop containing nucleotide triphosphate hydrolases"/>
    <property type="match status" value="2"/>
</dbReference>
<dbReference type="Gene3D" id="3.90.1440.10">
    <property type="entry name" value="SecA, preprotein cross-linking domain"/>
    <property type="match status" value="1"/>
</dbReference>
<dbReference type="HAMAP" id="MF_01382">
    <property type="entry name" value="SecA"/>
    <property type="match status" value="1"/>
</dbReference>
<dbReference type="InterPro" id="IPR014001">
    <property type="entry name" value="Helicase_ATP-bd"/>
</dbReference>
<dbReference type="InterPro" id="IPR027417">
    <property type="entry name" value="P-loop_NTPase"/>
</dbReference>
<dbReference type="InterPro" id="IPR000185">
    <property type="entry name" value="SecA"/>
</dbReference>
<dbReference type="InterPro" id="IPR020937">
    <property type="entry name" value="SecA_CS"/>
</dbReference>
<dbReference type="InterPro" id="IPR011115">
    <property type="entry name" value="SecA_DEAD"/>
</dbReference>
<dbReference type="InterPro" id="IPR014018">
    <property type="entry name" value="SecA_motor_DEAD"/>
</dbReference>
<dbReference type="InterPro" id="IPR011130">
    <property type="entry name" value="SecA_preprotein_X-link_dom"/>
</dbReference>
<dbReference type="InterPro" id="IPR044722">
    <property type="entry name" value="SecA_SF2_C"/>
</dbReference>
<dbReference type="InterPro" id="IPR011116">
    <property type="entry name" value="SecA_Wing/Scaffold"/>
</dbReference>
<dbReference type="InterPro" id="IPR036266">
    <property type="entry name" value="SecA_Wing/Scaffold_sf"/>
</dbReference>
<dbReference type="InterPro" id="IPR036670">
    <property type="entry name" value="SecA_X-link_sf"/>
</dbReference>
<dbReference type="NCBIfam" id="TIGR00963">
    <property type="entry name" value="secA"/>
    <property type="match status" value="1"/>
</dbReference>
<dbReference type="PANTHER" id="PTHR30612:SF11">
    <property type="entry name" value="PROTEIN TRANSLOCASE SUBUNIT SECA2, CHLOROPLASTIC"/>
    <property type="match status" value="1"/>
</dbReference>
<dbReference type="PANTHER" id="PTHR30612">
    <property type="entry name" value="SECA INNER MEMBRANE COMPONENT OF SEC PROTEIN SECRETION SYSTEM"/>
    <property type="match status" value="1"/>
</dbReference>
<dbReference type="Pfam" id="PF21090">
    <property type="entry name" value="P-loop_SecA"/>
    <property type="match status" value="1"/>
</dbReference>
<dbReference type="Pfam" id="PF07517">
    <property type="entry name" value="SecA_DEAD"/>
    <property type="match status" value="1"/>
</dbReference>
<dbReference type="Pfam" id="PF01043">
    <property type="entry name" value="SecA_PP_bind"/>
    <property type="match status" value="1"/>
</dbReference>
<dbReference type="Pfam" id="PF07516">
    <property type="entry name" value="SecA_SW"/>
    <property type="match status" value="1"/>
</dbReference>
<dbReference type="PRINTS" id="PR00906">
    <property type="entry name" value="SECA"/>
</dbReference>
<dbReference type="SMART" id="SM00957">
    <property type="entry name" value="SecA_DEAD"/>
    <property type="match status" value="1"/>
</dbReference>
<dbReference type="SMART" id="SM00958">
    <property type="entry name" value="SecA_PP_bind"/>
    <property type="match status" value="1"/>
</dbReference>
<dbReference type="SUPFAM" id="SSF81886">
    <property type="entry name" value="Helical scaffold and wing domains of SecA"/>
    <property type="match status" value="1"/>
</dbReference>
<dbReference type="SUPFAM" id="SSF52540">
    <property type="entry name" value="P-loop containing nucleoside triphosphate hydrolases"/>
    <property type="match status" value="2"/>
</dbReference>
<dbReference type="SUPFAM" id="SSF81767">
    <property type="entry name" value="Pre-protein crosslinking domain of SecA"/>
    <property type="match status" value="1"/>
</dbReference>
<dbReference type="PROSITE" id="PS01312">
    <property type="entry name" value="SECA"/>
    <property type="match status" value="1"/>
</dbReference>
<dbReference type="PROSITE" id="PS51196">
    <property type="entry name" value="SECA_MOTOR_DEAD"/>
    <property type="match status" value="1"/>
</dbReference>
<organism>
    <name type="scientific">Arabidopsis thaliana</name>
    <name type="common">Mouse-ear cress</name>
    <dbReference type="NCBI Taxonomy" id="3702"/>
    <lineage>
        <taxon>Eukaryota</taxon>
        <taxon>Viridiplantae</taxon>
        <taxon>Streptophyta</taxon>
        <taxon>Embryophyta</taxon>
        <taxon>Tracheophyta</taxon>
        <taxon>Spermatophyta</taxon>
        <taxon>Magnoliopsida</taxon>
        <taxon>eudicotyledons</taxon>
        <taxon>Gunneridae</taxon>
        <taxon>Pentapetalae</taxon>
        <taxon>rosids</taxon>
        <taxon>malvids</taxon>
        <taxon>Brassicales</taxon>
        <taxon>Brassicaceae</taxon>
        <taxon>Camelineae</taxon>
        <taxon>Arabidopsis</taxon>
    </lineage>
</organism>
<evidence type="ECO:0000250" key="1">
    <source>
        <dbReference type="UniProtKB" id="Q41062"/>
    </source>
</evidence>
<evidence type="ECO:0000255" key="2"/>
<evidence type="ECO:0000269" key="3">
    <source>
    </source>
</evidence>
<evidence type="ECO:0000303" key="4">
    <source>
    </source>
</evidence>
<evidence type="ECO:0000305" key="5"/>
<evidence type="ECO:0000305" key="6">
    <source>
    </source>
</evidence>
<evidence type="ECO:0000312" key="7">
    <source>
        <dbReference type="Araport" id="AT1G21650"/>
    </source>
</evidence>
<evidence type="ECO:0000312" key="8">
    <source>
        <dbReference type="EMBL" id="AAD41417.1"/>
    </source>
</evidence>
<accession>D8WUA4</accession>
<accession>F4HY37</accession>
<accession>Q9XI14</accession>
<keyword id="KW-0025">Alternative splicing</keyword>
<keyword id="KW-0067">ATP-binding</keyword>
<keyword id="KW-0150">Chloroplast</keyword>
<keyword id="KW-0472">Membrane</keyword>
<keyword id="KW-0547">Nucleotide-binding</keyword>
<keyword id="KW-0934">Plastid</keyword>
<keyword id="KW-0653">Protein transport</keyword>
<keyword id="KW-1185">Reference proteome</keyword>
<keyword id="KW-0809">Transit peptide</keyword>
<keyword id="KW-1278">Translocase</keyword>
<keyword id="KW-0811">Translocation</keyword>
<keyword id="KW-0813">Transport</keyword>
<sequence length="1058" mass="119654">MGSVSNLVSPNICHPAPPCLTSRSNKFPWTKPISGLLFYRSVTPIKRCHLVRRSCVVSASLTGNLGRLKRNVQDFTSMNYWVVRDYYRLVESVNSLEPQIQSLSDEQLKAKTAEFRERLARGESLADMQAEAFAVVREAAKRTIGMRHFDVQIIGGGVLHDGSIAEMKTGEGKTLVSTLAAYLNALTGEGVHVVTVNDYLAQRDAEWMGRVHRFLGLSVGLIQRGMKAEERKFNYSCDITYTNNSELGFDYLRDNLTSNREQLVMRWPKPFHFAIVDEVDSVLIDEGRNPLLISGEANENAARYPVAAKVAELLVKDSHYKVELKENSVELTEEGISLAEMALETGDLWDENDPWARFVMNALKAKEFYKRDVQYIVRDGKALIINELTGRVEDKRRWSEGVHQAVEAKEGLEIQADSIVVAQITYQSLFKLYPKLSGMTGTAKTEEKEFLKMFQIPVIEVPTNLSNIRIDLPIQAFATARGKWEHVRREVEDMFGQGRPVLVGTTSVENSEYLSELLKEWGIPHNVLNARPKYAAREADFIAQAGRKYAITISTNMAGRGTDIILGGNPKMLAREIIEDSILSYLTSEVLADNIDDDELSQKVLSKIKVGPSSLALLARASLMAKYVGKSESKSWTRKKAKSVVTESLEKSQTMDPMELQNLINEQSEMYPLGPAIALAYLSVLKDCEAHCLHEGSEVKRLGGLHVIGTSLHESRRIDNQLRGRAGRQGDPGSTRFMISLQDEMFQKFNFDTEWAVRLISKITNDEDLPIEGDTIVKQLLALQINAEKYFFGIRKSLVEFDEVLEVQRKHVYDLRQLLLTGENESCSQHIFQYMQAVVDEIVVGNSNPQKHPRYWSLAKLLKEFMAISGNLLDESFSGITEETMLQSLENLHEGSSIEMEDLSLPHLPKPPNAFRGIRRKNSSLRRWLDICSDNLTGSGSYRTLINLLRKFLGDYLIASYLNVVQESGFDDGYIKEIERAVLLKTLDCYWRDHLVNMNKLSSAVNVRSFAHRNPLEEYKIDGCRFFISMLSATRRLTVESILQYWSSPMESQELFIS</sequence>
<name>SECA2_ARATH</name>
<comment type="function">
    <text evidence="3">Involved in protein export. Probably interacts with other proteins to allow the postimport or conservative sorting pathway for inner membrane proteins in plastids. May have a central role in coupling the hydrolysis of ATP to the transfer of proteins across the membrane.</text>
</comment>
<comment type="catalytic activity">
    <reaction evidence="6">
        <text>ATP + H2O + chloroplast-proteinSide 1 = ADP + phosphate + chloroplast-proteinSide 2.</text>
        <dbReference type="EC" id="7.4.2.4"/>
    </reaction>
</comment>
<comment type="subunit">
    <text>Part of a second Sec protein translocation apparatus. Interacts probably with SCY2.</text>
</comment>
<comment type="subcellular location">
    <subcellularLocation>
        <location evidence="1">Plastid</location>
        <location evidence="1">Chloroplast membrane</location>
        <topology evidence="1">Peripheral membrane protein</topology>
    </subcellularLocation>
</comment>
<comment type="alternative products">
    <event type="alternative splicing"/>
    <isoform>
        <id>D8WUA4-1</id>
        <name>1</name>
        <sequence type="displayed"/>
    </isoform>
    <isoform>
        <id>D8WUA4-2</id>
        <name>2</name>
        <sequence type="described" ref="VSP_042065"/>
    </isoform>
</comment>
<comment type="disruption phenotype">
    <text evidence="3">Embryo lethal.</text>
</comment>
<comment type="miscellaneous">
    <text>Cannot substitute for SECA1.</text>
</comment>
<comment type="similarity">
    <text evidence="5">Belongs to the SecA family.</text>
</comment>
<comment type="sequence caution" evidence="5">
    <conflict type="erroneous gene model prediction">
        <sequence resource="EMBL-CDS" id="AAD41417"/>
    </conflict>
</comment>
<feature type="transit peptide" description="Chloroplast" evidence="2">
    <location>
        <begin position="1"/>
        <end position="58"/>
    </location>
</feature>
<feature type="chain" id="PRO_0000414228" description="Protein translocase subunit SECA2, chloroplastic">
    <location>
        <begin position="59"/>
        <end position="1058"/>
    </location>
</feature>
<feature type="binding site" evidence="2">
    <location>
        <begin position="167"/>
        <end position="174"/>
    </location>
    <ligand>
        <name>ATP</name>
        <dbReference type="ChEBI" id="CHEBI:30616"/>
    </ligand>
</feature>
<feature type="splice variant" id="VSP_042065" description="In isoform 2." evidence="5">
    <location>
        <begin position="875"/>
        <end position="881"/>
    </location>
</feature>
<proteinExistence type="evidence at protein level"/>
<protein>
    <recommendedName>
        <fullName evidence="5">Protein translocase subunit SECA2, chloroplastic</fullName>
        <ecNumber evidence="6">7.4.2.4</ecNumber>
    </recommendedName>
</protein>
<gene>
    <name evidence="4" type="primary">SECA2</name>
    <name evidence="7" type="ordered locus">At1g21650</name>
    <name evidence="8" type="ORF">F8K7.6</name>
</gene>
<reference key="1">
    <citation type="journal article" date="2011" name="Plant Physiol.">
        <title>Plastids contain a second sec translocase system with essential functions.</title>
        <authorList>
            <person name="Skalitzky C.A."/>
            <person name="Martin J.R."/>
            <person name="Harwood J.H."/>
            <person name="Beirne J.J."/>
            <person name="Adamczyk B.J."/>
            <person name="Heck G.R."/>
            <person name="Cline K."/>
            <person name="Fernandez D.E."/>
        </authorList>
    </citation>
    <scope>NUCLEOTIDE SEQUENCE [MRNA] (ISOFORM 1)</scope>
    <scope>FUNCTION</scope>
    <scope>CATALYTIC ACTIVITY</scope>
    <scope>DISRUPTION PHENOTYPE</scope>
</reference>
<reference key="2">
    <citation type="journal article" date="2000" name="Nature">
        <title>Sequence and analysis of chromosome 1 of the plant Arabidopsis thaliana.</title>
        <authorList>
            <person name="Theologis A."/>
            <person name="Ecker J.R."/>
            <person name="Palm C.J."/>
            <person name="Federspiel N.A."/>
            <person name="Kaul S."/>
            <person name="White O."/>
            <person name="Alonso J."/>
            <person name="Altafi H."/>
            <person name="Araujo R."/>
            <person name="Bowman C.L."/>
            <person name="Brooks S.Y."/>
            <person name="Buehler E."/>
            <person name="Chan A."/>
            <person name="Chao Q."/>
            <person name="Chen H."/>
            <person name="Cheuk R.F."/>
            <person name="Chin C.W."/>
            <person name="Chung M.K."/>
            <person name="Conn L."/>
            <person name="Conway A.B."/>
            <person name="Conway A.R."/>
            <person name="Creasy T.H."/>
            <person name="Dewar K."/>
            <person name="Dunn P."/>
            <person name="Etgu P."/>
            <person name="Feldblyum T.V."/>
            <person name="Feng J.-D."/>
            <person name="Fong B."/>
            <person name="Fujii C.Y."/>
            <person name="Gill J.E."/>
            <person name="Goldsmith A.D."/>
            <person name="Haas B."/>
            <person name="Hansen N.F."/>
            <person name="Hughes B."/>
            <person name="Huizar L."/>
            <person name="Hunter J.L."/>
            <person name="Jenkins J."/>
            <person name="Johnson-Hopson C."/>
            <person name="Khan S."/>
            <person name="Khaykin E."/>
            <person name="Kim C.J."/>
            <person name="Koo H.L."/>
            <person name="Kremenetskaia I."/>
            <person name="Kurtz D.B."/>
            <person name="Kwan A."/>
            <person name="Lam B."/>
            <person name="Langin-Hooper S."/>
            <person name="Lee A."/>
            <person name="Lee J.M."/>
            <person name="Lenz C.A."/>
            <person name="Li J.H."/>
            <person name="Li Y.-P."/>
            <person name="Lin X."/>
            <person name="Liu S.X."/>
            <person name="Liu Z.A."/>
            <person name="Luros J.S."/>
            <person name="Maiti R."/>
            <person name="Marziali A."/>
            <person name="Militscher J."/>
            <person name="Miranda M."/>
            <person name="Nguyen M."/>
            <person name="Nierman W.C."/>
            <person name="Osborne B.I."/>
            <person name="Pai G."/>
            <person name="Peterson J."/>
            <person name="Pham P.K."/>
            <person name="Rizzo M."/>
            <person name="Rooney T."/>
            <person name="Rowley D."/>
            <person name="Sakano H."/>
            <person name="Salzberg S.L."/>
            <person name="Schwartz J.R."/>
            <person name="Shinn P."/>
            <person name="Southwick A.M."/>
            <person name="Sun H."/>
            <person name="Tallon L.J."/>
            <person name="Tambunga G."/>
            <person name="Toriumi M.J."/>
            <person name="Town C.D."/>
            <person name="Utterback T."/>
            <person name="Van Aken S."/>
            <person name="Vaysberg M."/>
            <person name="Vysotskaia V.S."/>
            <person name="Walker M."/>
            <person name="Wu D."/>
            <person name="Yu G."/>
            <person name="Fraser C.M."/>
            <person name="Venter J.C."/>
            <person name="Davis R.W."/>
        </authorList>
    </citation>
    <scope>NUCLEOTIDE SEQUENCE [LARGE SCALE GENOMIC DNA]</scope>
    <source>
        <strain>cv. Columbia</strain>
    </source>
</reference>
<reference key="3">
    <citation type="journal article" date="2017" name="Plant J.">
        <title>Araport11: a complete reannotation of the Arabidopsis thaliana reference genome.</title>
        <authorList>
            <person name="Cheng C.Y."/>
            <person name="Krishnakumar V."/>
            <person name="Chan A.P."/>
            <person name="Thibaud-Nissen F."/>
            <person name="Schobel S."/>
            <person name="Town C.D."/>
        </authorList>
    </citation>
    <scope>GENOME REANNOTATION</scope>
    <source>
        <strain>cv. Columbia</strain>
    </source>
</reference>
<reference key="4">
    <citation type="journal article" date="2013" name="PLoS ONE">
        <title>Genome-wide comparative in silico analysis of the RNA helicase gene family in Zea mays and Glycine max: a comparison with Arabidopsis and Oryza sativa.</title>
        <authorList>
            <person name="Xu R."/>
            <person name="Zhang S."/>
            <person name="Huang J."/>
            <person name="Zheng C."/>
        </authorList>
    </citation>
    <scope>GENE FAMILY</scope>
</reference>